<dbReference type="EMBL" id="CU329671">
    <property type="protein sequence ID" value="CAB36871.1"/>
    <property type="molecule type" value="Genomic_DNA"/>
</dbReference>
<dbReference type="PIR" id="T40698">
    <property type="entry name" value="T40698"/>
</dbReference>
<dbReference type="BioGRID" id="277576">
    <property type="interactions" value="12"/>
</dbReference>
<dbReference type="FunCoup" id="O94693">
    <property type="interactions" value="704"/>
</dbReference>
<dbReference type="STRING" id="284812.O94693"/>
<dbReference type="iPTMnet" id="O94693"/>
<dbReference type="PaxDb" id="4896-SPBC83.09c.1"/>
<dbReference type="EnsemblFungi" id="SPBC83.09c.1">
    <property type="protein sequence ID" value="SPBC83.09c.1:pep"/>
    <property type="gene ID" value="SPBC83.09c"/>
</dbReference>
<dbReference type="KEGG" id="spo:2541061"/>
<dbReference type="PomBase" id="SPBC83.09c"/>
<dbReference type="VEuPathDB" id="FungiDB:SPBC83.09c"/>
<dbReference type="eggNOG" id="KOG2950">
    <property type="taxonomic scope" value="Eukaryota"/>
</dbReference>
<dbReference type="HOGENOM" id="CLU_674659_0_0_1"/>
<dbReference type="InParanoid" id="O94693"/>
<dbReference type="OMA" id="GENTNFY"/>
<dbReference type="PhylomeDB" id="O94693"/>
<dbReference type="PRO" id="PR:O94693"/>
<dbReference type="Proteomes" id="UP000002485">
    <property type="component" value="Chromosome II"/>
</dbReference>
<dbReference type="GO" id="GO:0005634">
    <property type="term" value="C:nucleus"/>
    <property type="evidence" value="ECO:0007005"/>
    <property type="project" value="PomBase"/>
</dbReference>
<dbReference type="GO" id="GO:0005682">
    <property type="term" value="C:U5 snRNP"/>
    <property type="evidence" value="ECO:0000318"/>
    <property type="project" value="GO_Central"/>
</dbReference>
<dbReference type="GO" id="GO:0000244">
    <property type="term" value="P:spliceosomal tri-snRNP complex assembly"/>
    <property type="evidence" value="ECO:0000250"/>
    <property type="project" value="PomBase"/>
</dbReference>
<dbReference type="CDD" id="cd00072">
    <property type="entry name" value="GYF"/>
    <property type="match status" value="1"/>
</dbReference>
<dbReference type="Gene3D" id="3.30.1490.40">
    <property type="match status" value="1"/>
</dbReference>
<dbReference type="InterPro" id="IPR039905">
    <property type="entry name" value="CD2BP2/Lin1"/>
</dbReference>
<dbReference type="InterPro" id="IPR003169">
    <property type="entry name" value="GYF"/>
</dbReference>
<dbReference type="InterPro" id="IPR035445">
    <property type="entry name" value="GYF-like_dom_sf"/>
</dbReference>
<dbReference type="PANTHER" id="PTHR13138:SF3">
    <property type="entry name" value="CD2 ANTIGEN CYTOPLASMIC TAIL-BINDING PROTEIN 2"/>
    <property type="match status" value="1"/>
</dbReference>
<dbReference type="PANTHER" id="PTHR13138">
    <property type="entry name" value="PROTEIN LIN1"/>
    <property type="match status" value="1"/>
</dbReference>
<dbReference type="Pfam" id="PF02213">
    <property type="entry name" value="GYF"/>
    <property type="match status" value="1"/>
</dbReference>
<dbReference type="SMART" id="SM00444">
    <property type="entry name" value="GYF"/>
    <property type="match status" value="1"/>
</dbReference>
<dbReference type="SUPFAM" id="SSF55277">
    <property type="entry name" value="GYF domain"/>
    <property type="match status" value="1"/>
</dbReference>
<dbReference type="PROSITE" id="PS50829">
    <property type="entry name" value="GYF"/>
    <property type="match status" value="1"/>
</dbReference>
<feature type="chain" id="PRO_0000195037" description="LIN1-like protein">
    <location>
        <begin position="1"/>
        <end position="408"/>
    </location>
</feature>
<feature type="domain" description="GYF" evidence="1">
    <location>
        <begin position="344"/>
        <end position="402"/>
    </location>
</feature>
<feature type="region of interest" description="Disordered" evidence="2">
    <location>
        <begin position="1"/>
        <end position="161"/>
    </location>
</feature>
<feature type="compositionally biased region" description="Acidic residues" evidence="2">
    <location>
        <begin position="41"/>
        <end position="52"/>
    </location>
</feature>
<feature type="compositionally biased region" description="Basic and acidic residues" evidence="2">
    <location>
        <begin position="53"/>
        <end position="62"/>
    </location>
</feature>
<feature type="compositionally biased region" description="Basic and acidic residues" evidence="2">
    <location>
        <begin position="73"/>
        <end position="109"/>
    </location>
</feature>
<feature type="compositionally biased region" description="Basic and acidic residues" evidence="2">
    <location>
        <begin position="119"/>
        <end position="129"/>
    </location>
</feature>
<accession>O94693</accession>
<protein>
    <recommendedName>
        <fullName>LIN1-like protein</fullName>
    </recommendedName>
</protein>
<proteinExistence type="inferred from homology"/>
<reference key="1">
    <citation type="journal article" date="2002" name="Nature">
        <title>The genome sequence of Schizosaccharomyces pombe.</title>
        <authorList>
            <person name="Wood V."/>
            <person name="Gwilliam R."/>
            <person name="Rajandream M.A."/>
            <person name="Lyne M.H."/>
            <person name="Lyne R."/>
            <person name="Stewart A."/>
            <person name="Sgouros J.G."/>
            <person name="Peat N."/>
            <person name="Hayles J."/>
            <person name="Baker S.G."/>
            <person name="Basham D."/>
            <person name="Bowman S."/>
            <person name="Brooks K."/>
            <person name="Brown D."/>
            <person name="Brown S."/>
            <person name="Chillingworth T."/>
            <person name="Churcher C.M."/>
            <person name="Collins M."/>
            <person name="Connor R."/>
            <person name="Cronin A."/>
            <person name="Davis P."/>
            <person name="Feltwell T."/>
            <person name="Fraser A."/>
            <person name="Gentles S."/>
            <person name="Goble A."/>
            <person name="Hamlin N."/>
            <person name="Harris D.E."/>
            <person name="Hidalgo J."/>
            <person name="Hodgson G."/>
            <person name="Holroyd S."/>
            <person name="Hornsby T."/>
            <person name="Howarth S."/>
            <person name="Huckle E.J."/>
            <person name="Hunt S."/>
            <person name="Jagels K."/>
            <person name="James K.D."/>
            <person name="Jones L."/>
            <person name="Jones M."/>
            <person name="Leather S."/>
            <person name="McDonald S."/>
            <person name="McLean J."/>
            <person name="Mooney P."/>
            <person name="Moule S."/>
            <person name="Mungall K.L."/>
            <person name="Murphy L.D."/>
            <person name="Niblett D."/>
            <person name="Odell C."/>
            <person name="Oliver K."/>
            <person name="O'Neil S."/>
            <person name="Pearson D."/>
            <person name="Quail M.A."/>
            <person name="Rabbinowitsch E."/>
            <person name="Rutherford K.M."/>
            <person name="Rutter S."/>
            <person name="Saunders D."/>
            <person name="Seeger K."/>
            <person name="Sharp S."/>
            <person name="Skelton J."/>
            <person name="Simmonds M.N."/>
            <person name="Squares R."/>
            <person name="Squares S."/>
            <person name="Stevens K."/>
            <person name="Taylor K."/>
            <person name="Taylor R.G."/>
            <person name="Tivey A."/>
            <person name="Walsh S.V."/>
            <person name="Warren T."/>
            <person name="Whitehead S."/>
            <person name="Woodward J.R."/>
            <person name="Volckaert G."/>
            <person name="Aert R."/>
            <person name="Robben J."/>
            <person name="Grymonprez B."/>
            <person name="Weltjens I."/>
            <person name="Vanstreels E."/>
            <person name="Rieger M."/>
            <person name="Schaefer M."/>
            <person name="Mueller-Auer S."/>
            <person name="Gabel C."/>
            <person name="Fuchs M."/>
            <person name="Duesterhoeft A."/>
            <person name="Fritzc C."/>
            <person name="Holzer E."/>
            <person name="Moestl D."/>
            <person name="Hilbert H."/>
            <person name="Borzym K."/>
            <person name="Langer I."/>
            <person name="Beck A."/>
            <person name="Lehrach H."/>
            <person name="Reinhardt R."/>
            <person name="Pohl T.M."/>
            <person name="Eger P."/>
            <person name="Zimmermann W."/>
            <person name="Wedler H."/>
            <person name="Wambutt R."/>
            <person name="Purnelle B."/>
            <person name="Goffeau A."/>
            <person name="Cadieu E."/>
            <person name="Dreano S."/>
            <person name="Gloux S."/>
            <person name="Lelaure V."/>
            <person name="Mottier S."/>
            <person name="Galibert F."/>
            <person name="Aves S.J."/>
            <person name="Xiang Z."/>
            <person name="Hunt C."/>
            <person name="Moore K."/>
            <person name="Hurst S.M."/>
            <person name="Lucas M."/>
            <person name="Rochet M."/>
            <person name="Gaillardin C."/>
            <person name="Tallada V.A."/>
            <person name="Garzon A."/>
            <person name="Thode G."/>
            <person name="Daga R.R."/>
            <person name="Cruzado L."/>
            <person name="Jimenez J."/>
            <person name="Sanchez M."/>
            <person name="del Rey F."/>
            <person name="Benito J."/>
            <person name="Dominguez A."/>
            <person name="Revuelta J.L."/>
            <person name="Moreno S."/>
            <person name="Armstrong J."/>
            <person name="Forsburg S.L."/>
            <person name="Cerutti L."/>
            <person name="Lowe T."/>
            <person name="McCombie W.R."/>
            <person name="Paulsen I."/>
            <person name="Potashkin J."/>
            <person name="Shpakovski G.V."/>
            <person name="Ussery D."/>
            <person name="Barrell B.G."/>
            <person name="Nurse P."/>
        </authorList>
    </citation>
    <scope>NUCLEOTIDE SEQUENCE [LARGE SCALE GENOMIC DNA]</scope>
    <source>
        <strain>972 / ATCC 24843</strain>
    </source>
</reference>
<organism>
    <name type="scientific">Schizosaccharomyces pombe (strain 972 / ATCC 24843)</name>
    <name type="common">Fission yeast</name>
    <dbReference type="NCBI Taxonomy" id="284812"/>
    <lineage>
        <taxon>Eukaryota</taxon>
        <taxon>Fungi</taxon>
        <taxon>Dikarya</taxon>
        <taxon>Ascomycota</taxon>
        <taxon>Taphrinomycotina</taxon>
        <taxon>Schizosaccharomycetes</taxon>
        <taxon>Schizosaccharomycetales</taxon>
        <taxon>Schizosaccharomycetaceae</taxon>
        <taxon>Schizosaccharomyces</taxon>
    </lineage>
</organism>
<comment type="similarity">
    <text evidence="3">Belongs to the LIN1 family.</text>
</comment>
<gene>
    <name type="ORF">SPBC83.09c</name>
</gene>
<name>LIN1_SCHPO</name>
<sequence>MKRTLRNPGNSSTVGDVHDVFFEYDVSNVGRKRPRTKEEGYYESESEEDEDQILNKEKKEGQSEDMFSDTSEDEKRTLPNDEAQKRRDFIENGDAERLAHKGLRNKEVLNDDSDDEDDNGKYSKLRYEDIEGQEDTNQANDLDADEEGSEISVPSSPKRMSFNLKEDMEEGDFDENGNFIRKNYDPESQYDAWLNGSVSNKKSIAAAREAEQKRKEMENRRRNQELEEFSKLPFSTVPEALSFFIARMERDESILEFLQRQSGNKKSYKKKKNNTAEGISPERKSADAFRKKLIELITAGLTFLEDKIGKEDIYSETRESLQRIYQKLTSNSWSSPVSYDDSNSSQYNFKWEFDDKTYGPYTASQIQAWSNEGYFTDAKHAAFIQLANMDEWMYPNNICFCDVVSLKK</sequence>
<keyword id="KW-1185">Reference proteome</keyword>
<evidence type="ECO:0000255" key="1">
    <source>
        <dbReference type="PROSITE-ProRule" id="PRU00101"/>
    </source>
</evidence>
<evidence type="ECO:0000256" key="2">
    <source>
        <dbReference type="SAM" id="MobiDB-lite"/>
    </source>
</evidence>
<evidence type="ECO:0000305" key="3"/>